<sequence>MSFKKFPRHLLSIRDLSRGEIVKLIDRSSEIKQAYKQNFQNRRSVQMSGLSSQNVAMIFSKRSTRTRVSVESAVSCLGGNAMFLGKDDIQLGVNESLYDTSKVISSMVSGIVARVNKYSDVATLAKHASCPVINGLCDTFHPLQALADLLTIKETFKSFDGLKVAWVGDANNVLHDLMIANAKVGIHTSVAKPKDVNVRDDILSIVNEAANENGSTFEIVNDPKVAVKNADIVVTDTWISMGQEAEKEQRLKQFTGFQVTGEIMKLAKPSCKFMHCLPRHPEEVSDEVFYGENSLVFQEAENRKWTTVAVLEALLVNRGEILPPASA</sequence>
<name>OTC_SCHPO</name>
<feature type="transit peptide" description="Mitochondrion">
    <location>
        <begin position="1"/>
        <end status="unknown"/>
    </location>
</feature>
<feature type="chain" id="PRO_0000020346" description="Ornithine carbamoyltransferase, mitochondrial">
    <location>
        <begin status="unknown"/>
        <end position="327"/>
    </location>
</feature>
<feature type="active site" description="Proton acceptor" evidence="1">
    <location>
        <position position="276"/>
    </location>
</feature>
<feature type="binding site" evidence="1">
    <location>
        <begin position="63"/>
        <end position="66"/>
    </location>
    <ligand>
        <name>carbamoyl phosphate</name>
        <dbReference type="ChEBI" id="CHEBI:58228"/>
    </ligand>
</feature>
<feature type="binding site" evidence="1">
    <location>
        <position position="114"/>
    </location>
    <ligand>
        <name>carbamoyl phosphate</name>
        <dbReference type="ChEBI" id="CHEBI:58228"/>
    </ligand>
</feature>
<feature type="binding site" evidence="1">
    <location>
        <position position="141"/>
    </location>
    <ligand>
        <name>carbamoyl phosphate</name>
        <dbReference type="ChEBI" id="CHEBI:58228"/>
    </ligand>
</feature>
<feature type="binding site" evidence="1">
    <location>
        <position position="144"/>
    </location>
    <ligand>
        <name>carbamoyl phosphate</name>
        <dbReference type="ChEBI" id="CHEBI:58228"/>
    </ligand>
</feature>
<feature type="binding site" evidence="1">
    <location>
        <position position="172"/>
    </location>
    <ligand>
        <name>L-ornithine</name>
        <dbReference type="ChEBI" id="CHEBI:46911"/>
    </ligand>
</feature>
<feature type="binding site" evidence="1">
    <location>
        <position position="236"/>
    </location>
    <ligand>
        <name>L-ornithine</name>
        <dbReference type="ChEBI" id="CHEBI:46911"/>
    </ligand>
</feature>
<feature type="binding site" evidence="1">
    <location>
        <position position="240"/>
    </location>
    <ligand>
        <name>L-ornithine</name>
        <dbReference type="ChEBI" id="CHEBI:46911"/>
    </ligand>
</feature>
<feature type="binding site" evidence="1">
    <location>
        <position position="241"/>
    </location>
    <ligand>
        <name>L-ornithine</name>
        <dbReference type="ChEBI" id="CHEBI:46911"/>
    </ligand>
</feature>
<feature type="binding site" evidence="1">
    <location>
        <begin position="276"/>
        <end position="277"/>
    </location>
    <ligand>
        <name>carbamoyl phosphate</name>
        <dbReference type="ChEBI" id="CHEBI:58228"/>
    </ligand>
</feature>
<feature type="binding site" evidence="1">
    <location>
        <position position="303"/>
    </location>
    <ligand>
        <name>carbamoyl phosphate</name>
        <dbReference type="ChEBI" id="CHEBI:58228"/>
    </ligand>
</feature>
<accession>P31317</accession>
<dbReference type="EC" id="2.1.3.3" evidence="2 3"/>
<dbReference type="EMBL" id="X63577">
    <property type="protein sequence ID" value="CAA45133.1"/>
    <property type="molecule type" value="Genomic_DNA"/>
</dbReference>
<dbReference type="EMBL" id="CU329670">
    <property type="protein sequence ID" value="CAA93560.1"/>
    <property type="molecule type" value="Genomic_DNA"/>
</dbReference>
<dbReference type="PIR" id="S22390">
    <property type="entry name" value="OWZP"/>
</dbReference>
<dbReference type="RefSeq" id="NP_593692.1">
    <property type="nucleotide sequence ID" value="NM_001019124.2"/>
</dbReference>
<dbReference type="SMR" id="P31317"/>
<dbReference type="BioGRID" id="280008">
    <property type="interactions" value="45"/>
</dbReference>
<dbReference type="FunCoup" id="P31317">
    <property type="interactions" value="369"/>
</dbReference>
<dbReference type="STRING" id="284812.P31317"/>
<dbReference type="PaxDb" id="4896-SPAC4G9.10.1"/>
<dbReference type="EnsemblFungi" id="SPAC4G9.10.1">
    <property type="protein sequence ID" value="SPAC4G9.10.1:pep"/>
    <property type="gene ID" value="SPAC4G9.10"/>
</dbReference>
<dbReference type="GeneID" id="2543593"/>
<dbReference type="KEGG" id="spo:2543593"/>
<dbReference type="PomBase" id="SPAC4G9.10">
    <property type="gene designation" value="arg3"/>
</dbReference>
<dbReference type="VEuPathDB" id="FungiDB:SPAC4G9.10"/>
<dbReference type="eggNOG" id="KOG1504">
    <property type="taxonomic scope" value="Eukaryota"/>
</dbReference>
<dbReference type="HOGENOM" id="CLU_043846_3_0_1"/>
<dbReference type="InParanoid" id="P31317"/>
<dbReference type="OMA" id="DGNNVCN"/>
<dbReference type="PhylomeDB" id="P31317"/>
<dbReference type="Reactome" id="R-SPO-1268020">
    <property type="pathway name" value="Mitochondrial protein import"/>
</dbReference>
<dbReference type="Reactome" id="R-SPO-70635">
    <property type="pathway name" value="Urea cycle"/>
</dbReference>
<dbReference type="UniPathway" id="UPA00068">
    <property type="reaction ID" value="UER00112"/>
</dbReference>
<dbReference type="PRO" id="PR:P31317"/>
<dbReference type="Proteomes" id="UP000002485">
    <property type="component" value="Chromosome I"/>
</dbReference>
<dbReference type="GO" id="GO:0005737">
    <property type="term" value="C:cytoplasm"/>
    <property type="evidence" value="ECO:0007005"/>
    <property type="project" value="PomBase"/>
</dbReference>
<dbReference type="GO" id="GO:0005759">
    <property type="term" value="C:mitochondrial matrix"/>
    <property type="evidence" value="ECO:0007669"/>
    <property type="project" value="UniProtKB-SubCell"/>
</dbReference>
<dbReference type="GO" id="GO:0005739">
    <property type="term" value="C:mitochondrion"/>
    <property type="evidence" value="ECO:0000314"/>
    <property type="project" value="PomBase"/>
</dbReference>
<dbReference type="GO" id="GO:0016597">
    <property type="term" value="F:amino acid binding"/>
    <property type="evidence" value="ECO:0007669"/>
    <property type="project" value="InterPro"/>
</dbReference>
<dbReference type="GO" id="GO:0004585">
    <property type="term" value="F:ornithine carbamoyltransferase activity"/>
    <property type="evidence" value="ECO:0000315"/>
    <property type="project" value="PomBase"/>
</dbReference>
<dbReference type="GO" id="GO:0042450">
    <property type="term" value="P:arginine biosynthetic process via ornithine"/>
    <property type="evidence" value="ECO:0000315"/>
    <property type="project" value="PomBase"/>
</dbReference>
<dbReference type="GO" id="GO:0019240">
    <property type="term" value="P:citrulline biosynthetic process"/>
    <property type="evidence" value="ECO:0000318"/>
    <property type="project" value="GO_Central"/>
</dbReference>
<dbReference type="GO" id="GO:0006526">
    <property type="term" value="P:L-arginine biosynthetic process"/>
    <property type="evidence" value="ECO:0007669"/>
    <property type="project" value="UniProtKB-UniPathway"/>
</dbReference>
<dbReference type="GO" id="GO:0000050">
    <property type="term" value="P:urea cycle"/>
    <property type="evidence" value="ECO:0000305"/>
    <property type="project" value="PomBase"/>
</dbReference>
<dbReference type="FunFam" id="3.40.50.1370:FF:000017">
    <property type="entry name" value="Ornithine carbamoyltransferase"/>
    <property type="match status" value="1"/>
</dbReference>
<dbReference type="FunFam" id="3.40.50.1370:FF:000009">
    <property type="entry name" value="Ornithine carbamoyltransferase, mitochondrial"/>
    <property type="match status" value="1"/>
</dbReference>
<dbReference type="Gene3D" id="3.40.50.1370">
    <property type="entry name" value="Aspartate/ornithine carbamoyltransferase"/>
    <property type="match status" value="2"/>
</dbReference>
<dbReference type="InterPro" id="IPR006132">
    <property type="entry name" value="Asp/Orn_carbamoyltranf_P-bd"/>
</dbReference>
<dbReference type="InterPro" id="IPR006130">
    <property type="entry name" value="Asp/Orn_carbamoylTrfase"/>
</dbReference>
<dbReference type="InterPro" id="IPR036901">
    <property type="entry name" value="Asp/Orn_carbamoylTrfase_sf"/>
</dbReference>
<dbReference type="InterPro" id="IPR006131">
    <property type="entry name" value="Asp_carbamoyltransf_Asp/Orn-bd"/>
</dbReference>
<dbReference type="InterPro" id="IPR002292">
    <property type="entry name" value="Orn/put_carbamltrans"/>
</dbReference>
<dbReference type="NCBIfam" id="TIGR00658">
    <property type="entry name" value="orni_carb_tr"/>
    <property type="match status" value="1"/>
</dbReference>
<dbReference type="NCBIfam" id="NF001986">
    <property type="entry name" value="PRK00779.1"/>
    <property type="match status" value="1"/>
</dbReference>
<dbReference type="PANTHER" id="PTHR45753">
    <property type="entry name" value="ORNITHINE CARBAMOYLTRANSFERASE, MITOCHONDRIAL"/>
    <property type="match status" value="1"/>
</dbReference>
<dbReference type="PANTHER" id="PTHR45753:SF3">
    <property type="entry name" value="ORNITHINE TRANSCARBAMYLASE, MITOCHONDRIAL"/>
    <property type="match status" value="1"/>
</dbReference>
<dbReference type="Pfam" id="PF00185">
    <property type="entry name" value="OTCace"/>
    <property type="match status" value="1"/>
</dbReference>
<dbReference type="Pfam" id="PF02729">
    <property type="entry name" value="OTCace_N"/>
    <property type="match status" value="1"/>
</dbReference>
<dbReference type="PRINTS" id="PR00100">
    <property type="entry name" value="AOTCASE"/>
</dbReference>
<dbReference type="PRINTS" id="PR00102">
    <property type="entry name" value="OTCASE"/>
</dbReference>
<dbReference type="SUPFAM" id="SSF53671">
    <property type="entry name" value="Aspartate/ornithine carbamoyltransferase"/>
    <property type="match status" value="1"/>
</dbReference>
<dbReference type="PROSITE" id="PS00097">
    <property type="entry name" value="CARBAMOYLTRANSFERASE"/>
    <property type="match status" value="1"/>
</dbReference>
<evidence type="ECO:0000250" key="1">
    <source>
        <dbReference type="UniProtKB" id="P00480"/>
    </source>
</evidence>
<evidence type="ECO:0000269" key="2">
    <source>
    </source>
</evidence>
<evidence type="ECO:0000269" key="3">
    <source>
    </source>
</evidence>
<evidence type="ECO:0000305" key="4"/>
<evidence type="ECO:0000305" key="5">
    <source>
    </source>
</evidence>
<evidence type="ECO:0000305" key="6">
    <source>
    </source>
</evidence>
<reference key="1">
    <citation type="journal article" date="1992" name="Eur. J. Biochem.">
        <title>Cloning and sequencing of arg3 and arg11 genes of Schizosaccharomyces pombe on a 10-kb DNA fragment. Heterologous expression and mitochondrial targeting of their translation products.</title>
        <authorList>
            <person name="van Huffel C."/>
            <person name="Dubois E."/>
            <person name="Messenguy F."/>
        </authorList>
    </citation>
    <scope>NUCLEOTIDE SEQUENCE [GENOMIC DNA]</scope>
    <scope>FUNCTION</scope>
    <scope>CATALYTIC ACTIVITY</scope>
    <scope>SUBCELLULAR LOCATION</scope>
    <source>
        <strain>ATCC 38365 / 975</strain>
    </source>
</reference>
<reference key="2">
    <citation type="journal article" date="2002" name="Nature">
        <title>The genome sequence of Schizosaccharomyces pombe.</title>
        <authorList>
            <person name="Wood V."/>
            <person name="Gwilliam R."/>
            <person name="Rajandream M.A."/>
            <person name="Lyne M.H."/>
            <person name="Lyne R."/>
            <person name="Stewart A."/>
            <person name="Sgouros J.G."/>
            <person name="Peat N."/>
            <person name="Hayles J."/>
            <person name="Baker S.G."/>
            <person name="Basham D."/>
            <person name="Bowman S."/>
            <person name="Brooks K."/>
            <person name="Brown D."/>
            <person name="Brown S."/>
            <person name="Chillingworth T."/>
            <person name="Churcher C.M."/>
            <person name="Collins M."/>
            <person name="Connor R."/>
            <person name="Cronin A."/>
            <person name="Davis P."/>
            <person name="Feltwell T."/>
            <person name="Fraser A."/>
            <person name="Gentles S."/>
            <person name="Goble A."/>
            <person name="Hamlin N."/>
            <person name="Harris D.E."/>
            <person name="Hidalgo J."/>
            <person name="Hodgson G."/>
            <person name="Holroyd S."/>
            <person name="Hornsby T."/>
            <person name="Howarth S."/>
            <person name="Huckle E.J."/>
            <person name="Hunt S."/>
            <person name="Jagels K."/>
            <person name="James K.D."/>
            <person name="Jones L."/>
            <person name="Jones M."/>
            <person name="Leather S."/>
            <person name="McDonald S."/>
            <person name="McLean J."/>
            <person name="Mooney P."/>
            <person name="Moule S."/>
            <person name="Mungall K.L."/>
            <person name="Murphy L.D."/>
            <person name="Niblett D."/>
            <person name="Odell C."/>
            <person name="Oliver K."/>
            <person name="O'Neil S."/>
            <person name="Pearson D."/>
            <person name="Quail M.A."/>
            <person name="Rabbinowitsch E."/>
            <person name="Rutherford K.M."/>
            <person name="Rutter S."/>
            <person name="Saunders D."/>
            <person name="Seeger K."/>
            <person name="Sharp S."/>
            <person name="Skelton J."/>
            <person name="Simmonds M.N."/>
            <person name="Squares R."/>
            <person name="Squares S."/>
            <person name="Stevens K."/>
            <person name="Taylor K."/>
            <person name="Taylor R.G."/>
            <person name="Tivey A."/>
            <person name="Walsh S.V."/>
            <person name="Warren T."/>
            <person name="Whitehead S."/>
            <person name="Woodward J.R."/>
            <person name="Volckaert G."/>
            <person name="Aert R."/>
            <person name="Robben J."/>
            <person name="Grymonprez B."/>
            <person name="Weltjens I."/>
            <person name="Vanstreels E."/>
            <person name="Rieger M."/>
            <person name="Schaefer M."/>
            <person name="Mueller-Auer S."/>
            <person name="Gabel C."/>
            <person name="Fuchs M."/>
            <person name="Duesterhoeft A."/>
            <person name="Fritzc C."/>
            <person name="Holzer E."/>
            <person name="Moestl D."/>
            <person name="Hilbert H."/>
            <person name="Borzym K."/>
            <person name="Langer I."/>
            <person name="Beck A."/>
            <person name="Lehrach H."/>
            <person name="Reinhardt R."/>
            <person name="Pohl T.M."/>
            <person name="Eger P."/>
            <person name="Zimmermann W."/>
            <person name="Wedler H."/>
            <person name="Wambutt R."/>
            <person name="Purnelle B."/>
            <person name="Goffeau A."/>
            <person name="Cadieu E."/>
            <person name="Dreano S."/>
            <person name="Gloux S."/>
            <person name="Lelaure V."/>
            <person name="Mottier S."/>
            <person name="Galibert F."/>
            <person name="Aves S.J."/>
            <person name="Xiang Z."/>
            <person name="Hunt C."/>
            <person name="Moore K."/>
            <person name="Hurst S.M."/>
            <person name="Lucas M."/>
            <person name="Rochet M."/>
            <person name="Gaillardin C."/>
            <person name="Tallada V.A."/>
            <person name="Garzon A."/>
            <person name="Thode G."/>
            <person name="Daga R.R."/>
            <person name="Cruzado L."/>
            <person name="Jimenez J."/>
            <person name="Sanchez M."/>
            <person name="del Rey F."/>
            <person name="Benito J."/>
            <person name="Dominguez A."/>
            <person name="Revuelta J.L."/>
            <person name="Moreno S."/>
            <person name="Armstrong J."/>
            <person name="Forsburg S.L."/>
            <person name="Cerutti L."/>
            <person name="Lowe T."/>
            <person name="McCombie W.R."/>
            <person name="Paulsen I."/>
            <person name="Potashkin J."/>
            <person name="Shpakovski G.V."/>
            <person name="Ussery D."/>
            <person name="Barrell B.G."/>
            <person name="Nurse P."/>
        </authorList>
    </citation>
    <scope>NUCLEOTIDE SEQUENCE [LARGE SCALE GENOMIC DNA]</scope>
    <source>
        <strain>972 / ATCC 24843</strain>
    </source>
</reference>
<reference key="3">
    <citation type="journal article" date="2008" name="Eukaryot. Cell">
        <title>Thiol-independent action of mitochondrial thioredoxin to support the urea cycle of arginine biosynthesis in Schizosaccharomyces pombe.</title>
        <authorList>
            <person name="Song J.Y."/>
            <person name="Kim K.D."/>
            <person name="Roe J.H."/>
        </authorList>
    </citation>
    <scope>FUNCTION</scope>
    <scope>CATALYTIC ACTIVITY</scope>
    <scope>INTERACTION WITH TRX2</scope>
    <scope>SUBCELLULAR LOCATION</scope>
</reference>
<keyword id="KW-0028">Amino-acid biosynthesis</keyword>
<keyword id="KW-0055">Arginine biosynthesis</keyword>
<keyword id="KW-0496">Mitochondrion</keyword>
<keyword id="KW-1185">Reference proteome</keyword>
<keyword id="KW-0808">Transferase</keyword>
<keyword id="KW-0809">Transit peptide</keyword>
<comment type="function">
    <text evidence="2 3">Ornithine carbamoyltransferase involved in the synthesis of arginine from glutamate via ornithine and the urea cycle.</text>
</comment>
<comment type="catalytic activity">
    <reaction evidence="2 3">
        <text>carbamoyl phosphate + L-ornithine = L-citrulline + phosphate + H(+)</text>
        <dbReference type="Rhea" id="RHEA:19513"/>
        <dbReference type="ChEBI" id="CHEBI:15378"/>
        <dbReference type="ChEBI" id="CHEBI:43474"/>
        <dbReference type="ChEBI" id="CHEBI:46911"/>
        <dbReference type="ChEBI" id="CHEBI:57743"/>
        <dbReference type="ChEBI" id="CHEBI:58228"/>
        <dbReference type="EC" id="2.1.3.3"/>
    </reaction>
    <physiologicalReaction direction="left-to-right" evidence="5 6">
        <dbReference type="Rhea" id="RHEA:19514"/>
    </physiologicalReaction>
</comment>
<comment type="pathway">
    <text evidence="5 6">Amino-acid biosynthesis; L-arginine biosynthesis; L-arginine from L-ornithine and carbamoyl phosphate: step 1/3.</text>
</comment>
<comment type="subunit">
    <text evidence="3">Interacts with trx2.</text>
</comment>
<comment type="subcellular location">
    <subcellularLocation>
        <location evidence="5 6">Mitochondrion matrix</location>
    </subcellularLocation>
</comment>
<comment type="similarity">
    <text evidence="4">Belongs to the aspartate/ornithine carbamoyltransferase superfamily. OTCase family.</text>
</comment>
<proteinExistence type="evidence at protein level"/>
<protein>
    <recommendedName>
        <fullName>Ornithine carbamoyltransferase, mitochondrial</fullName>
        <ecNumber evidence="2 3">2.1.3.3</ecNumber>
    </recommendedName>
    <alternativeName>
        <fullName>Ornithine transcarbamylase</fullName>
        <shortName>OTCase</shortName>
    </alternativeName>
</protein>
<organism>
    <name type="scientific">Schizosaccharomyces pombe (strain 972 / ATCC 24843)</name>
    <name type="common">Fission yeast</name>
    <dbReference type="NCBI Taxonomy" id="284812"/>
    <lineage>
        <taxon>Eukaryota</taxon>
        <taxon>Fungi</taxon>
        <taxon>Dikarya</taxon>
        <taxon>Ascomycota</taxon>
        <taxon>Taphrinomycotina</taxon>
        <taxon>Schizosaccharomycetes</taxon>
        <taxon>Schizosaccharomycetales</taxon>
        <taxon>Schizosaccharomycetaceae</taxon>
        <taxon>Schizosaccharomyces</taxon>
    </lineage>
</organism>
<gene>
    <name type="primary">arg3</name>
    <name type="ORF">SPAC4G9.10</name>
</gene>